<reference key="1">
    <citation type="journal article" date="2005" name="Genome Biol.">
        <title>Full-length cDNAs from chicken bursal lymphocytes to facilitate gene function analysis.</title>
        <authorList>
            <person name="Caldwell R.B."/>
            <person name="Kierzek A.M."/>
            <person name="Arakawa H."/>
            <person name="Bezzubov Y."/>
            <person name="Zaim J."/>
            <person name="Fiedler P."/>
            <person name="Kutter S."/>
            <person name="Blagodatski A."/>
            <person name="Kostovska D."/>
            <person name="Koter M."/>
            <person name="Plachy J."/>
            <person name="Carninci P."/>
            <person name="Hayashizaki Y."/>
            <person name="Buerstedde J.-M."/>
        </authorList>
    </citation>
    <scope>NUCLEOTIDE SEQUENCE [LARGE SCALE MRNA]</scope>
    <source>
        <strain>CB</strain>
        <tissue>Bursa of Fabricius</tissue>
    </source>
</reference>
<sequence>MVTEEEVTAIGRTLLDAAQPLPARFRALFTLRNLGGPAAIDCIVRGFADSSALLKHELAFCLGQMRDRAAIPALLGVLQDSQQEPMVRHEAGEALGAIGDPEVLDVLRRYSEDPVVEVAETCQLAVRRLEWLQEHGEEPGSSPYRSVDPAPPAEETDVATLRAVLLDESRPLFDRYRAMFALRNLGGRDAVLALADGLRAGSALFRHEIGYVLGQMQDEACVPQLTAALRSRAENPMVRHECAEALGSIARPSCLETLRAFAQDEERVVRESCEVALDMYEYENGPQFQYADGLCRLQA</sequence>
<protein>
    <recommendedName>
        <fullName evidence="3">Deoxyhypusine hydroxylase</fullName>
        <shortName evidence="3">DOHH</shortName>
        <ecNumber evidence="2 3">1.14.99.29</ecNumber>
    </recommendedName>
    <alternativeName>
        <fullName evidence="3">Deoxyhypusine dioxygenase</fullName>
    </alternativeName>
    <alternativeName>
        <fullName evidence="3">Deoxyhypusine monooxygenase</fullName>
    </alternativeName>
</protein>
<feature type="chain" id="PRO_0000248578" description="Deoxyhypusine hydroxylase">
    <location>
        <begin position="1"/>
        <end position="299"/>
    </location>
</feature>
<feature type="repeat" description="HEAT-like PBS-type 1">
    <location>
        <begin position="54"/>
        <end position="80"/>
    </location>
</feature>
<feature type="repeat" description="HEAT-like PBS-type 2">
    <location>
        <begin position="87"/>
        <end position="113"/>
    </location>
</feature>
<feature type="repeat" description="HEAT-like PBS-type 3">
    <location>
        <begin position="174"/>
        <end position="200"/>
    </location>
</feature>
<feature type="repeat" description="HEAT-like PBS-type 4">
    <location>
        <begin position="205"/>
        <end position="231"/>
    </location>
</feature>
<feature type="repeat" description="HEAT-like PBS-type 5">
    <location>
        <begin position="238"/>
        <end position="264"/>
    </location>
</feature>
<feature type="binding site" evidence="2 3">
    <location>
        <position position="56"/>
    </location>
    <ligand>
        <name>Fe cation</name>
        <dbReference type="ChEBI" id="CHEBI:24875"/>
        <label>1</label>
    </ligand>
</feature>
<feature type="binding site" evidence="2 3">
    <location>
        <position position="89"/>
    </location>
    <ligand>
        <name>Fe cation</name>
        <dbReference type="ChEBI" id="CHEBI:24875"/>
        <label>2</label>
    </ligand>
</feature>
<feature type="binding site" evidence="2 3">
    <location>
        <position position="90"/>
    </location>
    <ligand>
        <name>Fe cation</name>
        <dbReference type="ChEBI" id="CHEBI:24875"/>
        <label>2</label>
    </ligand>
</feature>
<feature type="binding site" evidence="2 3">
    <location>
        <position position="207"/>
    </location>
    <ligand>
        <name>Fe cation</name>
        <dbReference type="ChEBI" id="CHEBI:24875"/>
        <label>2</label>
    </ligand>
</feature>
<feature type="binding site" evidence="2 3">
    <location>
        <position position="240"/>
    </location>
    <ligand>
        <name>Fe cation</name>
        <dbReference type="ChEBI" id="CHEBI:24875"/>
        <label>1</label>
    </ligand>
</feature>
<feature type="binding site" evidence="2 3">
    <location>
        <position position="241"/>
    </location>
    <ligand>
        <name>Fe cation</name>
        <dbReference type="ChEBI" id="CHEBI:24875"/>
        <label>1</label>
    </ligand>
</feature>
<organism>
    <name type="scientific">Gallus gallus</name>
    <name type="common">Chicken</name>
    <dbReference type="NCBI Taxonomy" id="9031"/>
    <lineage>
        <taxon>Eukaryota</taxon>
        <taxon>Metazoa</taxon>
        <taxon>Chordata</taxon>
        <taxon>Craniata</taxon>
        <taxon>Vertebrata</taxon>
        <taxon>Euteleostomi</taxon>
        <taxon>Archelosauria</taxon>
        <taxon>Archosauria</taxon>
        <taxon>Dinosauria</taxon>
        <taxon>Saurischia</taxon>
        <taxon>Theropoda</taxon>
        <taxon>Coelurosauria</taxon>
        <taxon>Aves</taxon>
        <taxon>Neognathae</taxon>
        <taxon>Galloanserae</taxon>
        <taxon>Galliformes</taxon>
        <taxon>Phasianidae</taxon>
        <taxon>Phasianinae</taxon>
        <taxon>Gallus</taxon>
    </lineage>
</organism>
<name>DOHH_CHICK</name>
<dbReference type="EC" id="1.14.99.29" evidence="2 3"/>
<dbReference type="EMBL" id="AJ720741">
    <property type="protein sequence ID" value="CAG32400.1"/>
    <property type="molecule type" value="mRNA"/>
</dbReference>
<dbReference type="RefSeq" id="NP_001026584.1">
    <property type="nucleotide sequence ID" value="NM_001031413.2"/>
</dbReference>
<dbReference type="RefSeq" id="XP_040509506.1">
    <property type="nucleotide sequence ID" value="XM_040653572.2"/>
</dbReference>
<dbReference type="RefSeq" id="XP_040509507.1">
    <property type="nucleotide sequence ID" value="XM_040653573.1"/>
</dbReference>
<dbReference type="RefSeq" id="XP_046789819.1">
    <property type="nucleotide sequence ID" value="XM_046933863.1"/>
</dbReference>
<dbReference type="RefSeq" id="XP_046789820.1">
    <property type="nucleotide sequence ID" value="XM_046933864.1"/>
</dbReference>
<dbReference type="SMR" id="Q5ZIP3"/>
<dbReference type="FunCoup" id="Q5ZIP3">
    <property type="interactions" value="1886"/>
</dbReference>
<dbReference type="STRING" id="9031.ENSGALP00000028167"/>
<dbReference type="PaxDb" id="9031-ENSGALP00000028167"/>
<dbReference type="Ensembl" id="ENSGALT00010068224.1">
    <property type="protein sequence ID" value="ENSGALP00010041967.1"/>
    <property type="gene ID" value="ENSGALG00010028156.1"/>
</dbReference>
<dbReference type="GeneID" id="427066"/>
<dbReference type="KEGG" id="gga:427066"/>
<dbReference type="CTD" id="83475"/>
<dbReference type="VEuPathDB" id="HostDB:geneid_427066"/>
<dbReference type="eggNOG" id="KOG0567">
    <property type="taxonomic scope" value="Eukaryota"/>
</dbReference>
<dbReference type="GeneTree" id="ENSGT00500000044957"/>
<dbReference type="HOGENOM" id="CLU_053974_0_0_1"/>
<dbReference type="InParanoid" id="Q5ZIP3"/>
<dbReference type="OMA" id="LQEPCSI"/>
<dbReference type="OrthoDB" id="421002at2759"/>
<dbReference type="PhylomeDB" id="Q5ZIP3"/>
<dbReference type="Reactome" id="R-GGA-204626">
    <property type="pathway name" value="Hypusine synthesis from eIF5A-lysine"/>
</dbReference>
<dbReference type="UniPathway" id="UPA00354"/>
<dbReference type="PRO" id="PR:Q5ZIP3"/>
<dbReference type="Proteomes" id="UP000000539">
    <property type="component" value="Chromosome 28"/>
</dbReference>
<dbReference type="Bgee" id="ENSGALG00000017524">
    <property type="expression patterns" value="Expressed in granulocyte and 14 other cell types or tissues"/>
</dbReference>
<dbReference type="GO" id="GO:0019135">
    <property type="term" value="F:deoxyhypusine monooxygenase activity"/>
    <property type="evidence" value="ECO:0000250"/>
    <property type="project" value="UniProtKB"/>
</dbReference>
<dbReference type="GO" id="GO:0005506">
    <property type="term" value="F:iron ion binding"/>
    <property type="evidence" value="ECO:0000250"/>
    <property type="project" value="UniProtKB"/>
</dbReference>
<dbReference type="GO" id="GO:0008612">
    <property type="term" value="P:peptidyl-lysine modification to peptidyl-hypusine"/>
    <property type="evidence" value="ECO:0000250"/>
    <property type="project" value="UniProtKB"/>
</dbReference>
<dbReference type="FunFam" id="1.25.10.10:FF:000099">
    <property type="entry name" value="Deoxyhypusine hydroxylase"/>
    <property type="match status" value="2"/>
</dbReference>
<dbReference type="Gene3D" id="1.25.10.10">
    <property type="entry name" value="Leucine-rich Repeat Variant"/>
    <property type="match status" value="2"/>
</dbReference>
<dbReference type="HAMAP" id="MF_03101">
    <property type="entry name" value="Deoxyhypusine_hydroxylase"/>
    <property type="match status" value="1"/>
</dbReference>
<dbReference type="InterPro" id="IPR011989">
    <property type="entry name" value="ARM-like"/>
</dbReference>
<dbReference type="InterPro" id="IPR016024">
    <property type="entry name" value="ARM-type_fold"/>
</dbReference>
<dbReference type="InterPro" id="IPR027517">
    <property type="entry name" value="Deoxyhypusine_hydroxylase"/>
</dbReference>
<dbReference type="InterPro" id="IPR011030">
    <property type="entry name" value="Lipovitellin_superhlx_dom"/>
</dbReference>
<dbReference type="InterPro" id="IPR004155">
    <property type="entry name" value="PBS_lyase_HEAT"/>
</dbReference>
<dbReference type="PANTHER" id="PTHR12697:SF5">
    <property type="entry name" value="DEOXYHYPUSINE HYDROXYLASE"/>
    <property type="match status" value="1"/>
</dbReference>
<dbReference type="PANTHER" id="PTHR12697">
    <property type="entry name" value="PBS LYASE HEAT-LIKE PROTEIN"/>
    <property type="match status" value="1"/>
</dbReference>
<dbReference type="Pfam" id="PF13646">
    <property type="entry name" value="HEAT_2"/>
    <property type="match status" value="2"/>
</dbReference>
<dbReference type="SMART" id="SM00567">
    <property type="entry name" value="EZ_HEAT"/>
    <property type="match status" value="6"/>
</dbReference>
<dbReference type="SUPFAM" id="SSF48371">
    <property type="entry name" value="ARM repeat"/>
    <property type="match status" value="1"/>
</dbReference>
<dbReference type="SUPFAM" id="SSF48431">
    <property type="entry name" value="Lipovitellin-phosvitin complex, superhelical domain"/>
    <property type="match status" value="1"/>
</dbReference>
<evidence type="ECO:0000250" key="1">
    <source>
        <dbReference type="UniProtKB" id="Q99LN9"/>
    </source>
</evidence>
<evidence type="ECO:0000250" key="2">
    <source>
        <dbReference type="UniProtKB" id="Q9BU89"/>
    </source>
</evidence>
<evidence type="ECO:0000255" key="3">
    <source>
        <dbReference type="HAMAP-Rule" id="MF_03101"/>
    </source>
</evidence>
<gene>
    <name evidence="3" type="primary">DOHH</name>
    <name type="ORF">RCJMB04_24i7</name>
</gene>
<comment type="function">
    <text evidence="1 3">Catalyzes the hydroxylation of the N(6)-(4-aminobutyl)-L-lysine intermediate produced by deoxyhypusine synthase/DHPS on a critical lysine of the eukaryotic translation initiation factor 5A/eIF-5A. This is the second step of the post-translational modification of that lysine into an unusual amino acid residue named hypusine. Hypusination is unique to mature eIF-5A factor and is essential for its function.</text>
</comment>
<comment type="catalytic activity">
    <reaction evidence="2 3">
        <text>[eIF5A protein]-deoxyhypusine + AH2 + O2 = [eIF5A protein]-hypusine + A + H2O</text>
        <dbReference type="Rhea" id="RHEA:14101"/>
        <dbReference type="Rhea" id="RHEA-COMP:10144"/>
        <dbReference type="Rhea" id="RHEA-COMP:12592"/>
        <dbReference type="ChEBI" id="CHEBI:13193"/>
        <dbReference type="ChEBI" id="CHEBI:15377"/>
        <dbReference type="ChEBI" id="CHEBI:15379"/>
        <dbReference type="ChEBI" id="CHEBI:17499"/>
        <dbReference type="ChEBI" id="CHEBI:82657"/>
        <dbReference type="ChEBI" id="CHEBI:91175"/>
        <dbReference type="EC" id="1.14.99.29"/>
    </reaction>
</comment>
<comment type="cofactor">
    <cofactor evidence="2 3">
        <name>Fe(2+)</name>
        <dbReference type="ChEBI" id="CHEBI:29033"/>
    </cofactor>
    <text evidence="2 3">Binds 2 Fe(2+) ions per subunit.</text>
</comment>
<comment type="pathway">
    <text evidence="2 3">Protein modification; eIF5A hypusination.</text>
</comment>
<comment type="similarity">
    <text evidence="3">Belongs to the deoxyhypusine hydroxylase family.</text>
</comment>
<keyword id="KW-0386">Hypusine biosynthesis</keyword>
<keyword id="KW-0408">Iron</keyword>
<keyword id="KW-0479">Metal-binding</keyword>
<keyword id="KW-0503">Monooxygenase</keyword>
<keyword id="KW-0560">Oxidoreductase</keyword>
<keyword id="KW-1185">Reference proteome</keyword>
<keyword id="KW-0677">Repeat</keyword>
<accession>Q5ZIP3</accession>
<proteinExistence type="evidence at transcript level"/>